<evidence type="ECO:0000255" key="1">
    <source>
        <dbReference type="HAMAP-Rule" id="MF_01710"/>
    </source>
</evidence>
<keyword id="KW-0067">ATP-binding</keyword>
<keyword id="KW-1003">Cell membrane</keyword>
<keyword id="KW-0472">Membrane</keyword>
<keyword id="KW-0547">Nucleotide-binding</keyword>
<keyword id="KW-1185">Reference proteome</keyword>
<keyword id="KW-1278">Translocase</keyword>
<keyword id="KW-0813">Transport</keyword>
<protein>
    <recommendedName>
        <fullName evidence="1">Energy-coupling factor transporter ATP-binding protein EcfA1</fullName>
        <shortName evidence="1">ECF transporter A component EcfA1</shortName>
        <ecNumber evidence="1">7.-.-.-</ecNumber>
    </recommendedName>
</protein>
<name>ECFA1_LISMO</name>
<proteinExistence type="inferred from homology"/>
<feature type="chain" id="PRO_0000092032" description="Energy-coupling factor transporter ATP-binding protein EcfA1">
    <location>
        <begin position="1"/>
        <end position="279"/>
    </location>
</feature>
<feature type="domain" description="ABC transporter" evidence="1">
    <location>
        <begin position="6"/>
        <end position="240"/>
    </location>
</feature>
<feature type="binding site" evidence="1">
    <location>
        <begin position="40"/>
        <end position="47"/>
    </location>
    <ligand>
        <name>ATP</name>
        <dbReference type="ChEBI" id="CHEBI:30616"/>
    </ligand>
</feature>
<reference key="1">
    <citation type="journal article" date="2001" name="Science">
        <title>Comparative genomics of Listeria species.</title>
        <authorList>
            <person name="Glaser P."/>
            <person name="Frangeul L."/>
            <person name="Buchrieser C."/>
            <person name="Rusniok C."/>
            <person name="Amend A."/>
            <person name="Baquero F."/>
            <person name="Berche P."/>
            <person name="Bloecker H."/>
            <person name="Brandt P."/>
            <person name="Chakraborty T."/>
            <person name="Charbit A."/>
            <person name="Chetouani F."/>
            <person name="Couve E."/>
            <person name="de Daruvar A."/>
            <person name="Dehoux P."/>
            <person name="Domann E."/>
            <person name="Dominguez-Bernal G."/>
            <person name="Duchaud E."/>
            <person name="Durant L."/>
            <person name="Dussurget O."/>
            <person name="Entian K.-D."/>
            <person name="Fsihi H."/>
            <person name="Garcia-del Portillo F."/>
            <person name="Garrido P."/>
            <person name="Gautier L."/>
            <person name="Goebel W."/>
            <person name="Gomez-Lopez N."/>
            <person name="Hain T."/>
            <person name="Hauf J."/>
            <person name="Jackson D."/>
            <person name="Jones L.-M."/>
            <person name="Kaerst U."/>
            <person name="Kreft J."/>
            <person name="Kuhn M."/>
            <person name="Kunst F."/>
            <person name="Kurapkat G."/>
            <person name="Madueno E."/>
            <person name="Maitournam A."/>
            <person name="Mata Vicente J."/>
            <person name="Ng E."/>
            <person name="Nedjari H."/>
            <person name="Nordsiek G."/>
            <person name="Novella S."/>
            <person name="de Pablos B."/>
            <person name="Perez-Diaz J.-C."/>
            <person name="Purcell R."/>
            <person name="Remmel B."/>
            <person name="Rose M."/>
            <person name="Schlueter T."/>
            <person name="Simoes N."/>
            <person name="Tierrez A."/>
            <person name="Vazquez-Boland J.-A."/>
            <person name="Voss H."/>
            <person name="Wehland J."/>
            <person name="Cossart P."/>
        </authorList>
    </citation>
    <scope>NUCLEOTIDE SEQUENCE [LARGE SCALE GENOMIC DNA]</scope>
    <source>
        <strain>ATCC BAA-679 / EGD-e</strain>
    </source>
</reference>
<organism>
    <name type="scientific">Listeria monocytogenes serovar 1/2a (strain ATCC BAA-679 / EGD-e)</name>
    <dbReference type="NCBI Taxonomy" id="169963"/>
    <lineage>
        <taxon>Bacteria</taxon>
        <taxon>Bacillati</taxon>
        <taxon>Bacillota</taxon>
        <taxon>Bacilli</taxon>
        <taxon>Bacillales</taxon>
        <taxon>Listeriaceae</taxon>
        <taxon>Listeria</taxon>
    </lineage>
</organism>
<sequence length="279" mass="30911">MAESFVRLEHVFYKYEDTEKYAVKDVSISAQKGEWVALVGHNGSGKSTIAKLLNGLLFPEDGLIKIGHFVLSEKNIWEIRRQVGMVFQNPDNQFVGATVQDDVAFGLENHGVPHDTMVERVESALNEVGMQSYALHEPARLSGGQKQRVAIAGVLALQPDVIILDEATSMLDPRGRAEVMETIRIMREQEDITVISITHDLDEVLFADRVIVMNKGEIHSEGTPKEIFQQADAMREIGLGVPFIIELQEKLVAGGFETGSTVLSEGALLDQLWKLNSNN</sequence>
<comment type="function">
    <text evidence="1">ATP-binding (A) component of a common energy-coupling factor (ECF) ABC-transporter complex. Unlike classic ABC transporters this ECF transporter provides the energy necessary to transport a number of different substrates.</text>
</comment>
<comment type="subunit">
    <text evidence="1">Forms a stable energy-coupling factor (ECF) transporter complex composed of 2 membrane-embedded substrate-binding proteins (S component), 2 ATP-binding proteins (A component) and 2 transmembrane proteins (T component).</text>
</comment>
<comment type="subcellular location">
    <subcellularLocation>
        <location evidence="1">Cell membrane</location>
        <topology evidence="1">Peripheral membrane protein</topology>
    </subcellularLocation>
</comment>
<comment type="similarity">
    <text evidence="1">Belongs to the ABC transporter superfamily. Energy-coupling factor EcfA family.</text>
</comment>
<accession>Q8Y454</accession>
<gene>
    <name evidence="1" type="primary">ecfA1</name>
    <name type="synonym">cbiO1</name>
    <name type="ordered locus">lmo2601</name>
</gene>
<dbReference type="EC" id="7.-.-.-" evidence="1"/>
<dbReference type="EMBL" id="AL591983">
    <property type="protein sequence ID" value="CAD00679.1"/>
    <property type="molecule type" value="Genomic_DNA"/>
</dbReference>
<dbReference type="PIR" id="AI1399">
    <property type="entry name" value="AI1399"/>
</dbReference>
<dbReference type="RefSeq" id="WP_008948839.1">
    <property type="nucleotide sequence ID" value="NZ_CP149495.1"/>
</dbReference>
<dbReference type="SMR" id="Q8Y454"/>
<dbReference type="STRING" id="169963.gene:17595319"/>
<dbReference type="PaxDb" id="169963-lmo2601"/>
<dbReference type="EnsemblBacteria" id="CAD00679">
    <property type="protein sequence ID" value="CAD00679"/>
    <property type="gene ID" value="CAD00679"/>
</dbReference>
<dbReference type="KEGG" id="lmo:lmo2601"/>
<dbReference type="PATRIC" id="fig|169963.11.peg.2665"/>
<dbReference type="eggNOG" id="COG1122">
    <property type="taxonomic scope" value="Bacteria"/>
</dbReference>
<dbReference type="HOGENOM" id="CLU_000604_1_22_9"/>
<dbReference type="OrthoDB" id="9784332at2"/>
<dbReference type="PhylomeDB" id="Q8Y454"/>
<dbReference type="BioCyc" id="LMON169963:LMO2601-MONOMER"/>
<dbReference type="Proteomes" id="UP000000817">
    <property type="component" value="Chromosome"/>
</dbReference>
<dbReference type="GO" id="GO:0043190">
    <property type="term" value="C:ATP-binding cassette (ABC) transporter complex"/>
    <property type="evidence" value="ECO:0000318"/>
    <property type="project" value="GO_Central"/>
</dbReference>
<dbReference type="GO" id="GO:0005524">
    <property type="term" value="F:ATP binding"/>
    <property type="evidence" value="ECO:0000318"/>
    <property type="project" value="GO_Central"/>
</dbReference>
<dbReference type="GO" id="GO:0016887">
    <property type="term" value="F:ATP hydrolysis activity"/>
    <property type="evidence" value="ECO:0007669"/>
    <property type="project" value="InterPro"/>
</dbReference>
<dbReference type="GO" id="GO:0042626">
    <property type="term" value="F:ATPase-coupled transmembrane transporter activity"/>
    <property type="evidence" value="ECO:0000318"/>
    <property type="project" value="GO_Central"/>
</dbReference>
<dbReference type="CDD" id="cd03225">
    <property type="entry name" value="ABC_cobalt_CbiO_domain1"/>
    <property type="match status" value="1"/>
</dbReference>
<dbReference type="FunFam" id="3.40.50.300:FF:000224">
    <property type="entry name" value="Energy-coupling factor transporter ATP-binding protein EcfA"/>
    <property type="match status" value="1"/>
</dbReference>
<dbReference type="Gene3D" id="3.40.50.300">
    <property type="entry name" value="P-loop containing nucleotide triphosphate hydrolases"/>
    <property type="match status" value="1"/>
</dbReference>
<dbReference type="InterPro" id="IPR003593">
    <property type="entry name" value="AAA+_ATPase"/>
</dbReference>
<dbReference type="InterPro" id="IPR003439">
    <property type="entry name" value="ABC_transporter-like_ATP-bd"/>
</dbReference>
<dbReference type="InterPro" id="IPR017871">
    <property type="entry name" value="ABC_transporter-like_CS"/>
</dbReference>
<dbReference type="InterPro" id="IPR015856">
    <property type="entry name" value="ABC_transpr_CbiO/EcfA_su"/>
</dbReference>
<dbReference type="InterPro" id="IPR050095">
    <property type="entry name" value="ECF_ABC_transporter_ATP-bd"/>
</dbReference>
<dbReference type="InterPro" id="IPR030947">
    <property type="entry name" value="EcfA_1"/>
</dbReference>
<dbReference type="InterPro" id="IPR027417">
    <property type="entry name" value="P-loop_NTPase"/>
</dbReference>
<dbReference type="NCBIfam" id="TIGR04520">
    <property type="entry name" value="ECF_ATPase_1"/>
    <property type="match status" value="1"/>
</dbReference>
<dbReference type="NCBIfam" id="NF010156">
    <property type="entry name" value="PRK13635.1"/>
    <property type="match status" value="1"/>
</dbReference>
<dbReference type="NCBIfam" id="NF010167">
    <property type="entry name" value="PRK13648.1"/>
    <property type="match status" value="1"/>
</dbReference>
<dbReference type="PANTHER" id="PTHR43553:SF24">
    <property type="entry name" value="ENERGY-COUPLING FACTOR TRANSPORTER ATP-BINDING PROTEIN ECFA1"/>
    <property type="match status" value="1"/>
</dbReference>
<dbReference type="PANTHER" id="PTHR43553">
    <property type="entry name" value="HEAVY METAL TRANSPORTER"/>
    <property type="match status" value="1"/>
</dbReference>
<dbReference type="Pfam" id="PF00005">
    <property type="entry name" value="ABC_tran"/>
    <property type="match status" value="1"/>
</dbReference>
<dbReference type="SMART" id="SM00382">
    <property type="entry name" value="AAA"/>
    <property type="match status" value="1"/>
</dbReference>
<dbReference type="SUPFAM" id="SSF52540">
    <property type="entry name" value="P-loop containing nucleoside triphosphate hydrolases"/>
    <property type="match status" value="1"/>
</dbReference>
<dbReference type="PROSITE" id="PS00211">
    <property type="entry name" value="ABC_TRANSPORTER_1"/>
    <property type="match status" value="1"/>
</dbReference>
<dbReference type="PROSITE" id="PS50893">
    <property type="entry name" value="ABC_TRANSPORTER_2"/>
    <property type="match status" value="1"/>
</dbReference>
<dbReference type="PROSITE" id="PS51246">
    <property type="entry name" value="CBIO"/>
    <property type="match status" value="1"/>
</dbReference>